<protein>
    <recommendedName>
        <fullName evidence="1">Fluoride-specific ion channel FluC 3</fullName>
    </recommendedName>
</protein>
<dbReference type="EMBL" id="AL590842">
    <property type="protein sequence ID" value="CAL21296.1"/>
    <property type="molecule type" value="Genomic_DNA"/>
</dbReference>
<dbReference type="EMBL" id="AE009952">
    <property type="protein sequence ID" value="AAM84823.1"/>
    <property type="molecule type" value="Genomic_DNA"/>
</dbReference>
<dbReference type="EMBL" id="AE017042">
    <property type="protein sequence ID" value="AAS62677.1"/>
    <property type="molecule type" value="Genomic_DNA"/>
</dbReference>
<dbReference type="PIR" id="AE0326">
    <property type="entry name" value="AE0326"/>
</dbReference>
<dbReference type="RefSeq" id="YP_002347625.1">
    <property type="nucleotide sequence ID" value="NC_003143.1"/>
</dbReference>
<dbReference type="SMR" id="Q8ZDB1"/>
<dbReference type="STRING" id="214092.YPO2677"/>
<dbReference type="PaxDb" id="214092-YPO2677"/>
<dbReference type="DNASU" id="1146196"/>
<dbReference type="EnsemblBacteria" id="AAS62677">
    <property type="protein sequence ID" value="AAS62677"/>
    <property type="gene ID" value="YP_2478"/>
</dbReference>
<dbReference type="KEGG" id="ype:YPO2677"/>
<dbReference type="KEGG" id="ypk:y1249"/>
<dbReference type="KEGG" id="ypm:YP_2478"/>
<dbReference type="PATRIC" id="fig|214092.21.peg.3112"/>
<dbReference type="eggNOG" id="COG0239">
    <property type="taxonomic scope" value="Bacteria"/>
</dbReference>
<dbReference type="HOGENOM" id="CLU_114342_3_0_6"/>
<dbReference type="OMA" id="CRYGITV"/>
<dbReference type="OrthoDB" id="9806299at2"/>
<dbReference type="Proteomes" id="UP000000815">
    <property type="component" value="Chromosome"/>
</dbReference>
<dbReference type="Proteomes" id="UP000001019">
    <property type="component" value="Chromosome"/>
</dbReference>
<dbReference type="Proteomes" id="UP000002490">
    <property type="component" value="Chromosome"/>
</dbReference>
<dbReference type="GO" id="GO:0005886">
    <property type="term" value="C:plasma membrane"/>
    <property type="evidence" value="ECO:0000318"/>
    <property type="project" value="GO_Central"/>
</dbReference>
<dbReference type="GO" id="GO:0062054">
    <property type="term" value="F:fluoride channel activity"/>
    <property type="evidence" value="ECO:0007669"/>
    <property type="project" value="UniProtKB-UniRule"/>
</dbReference>
<dbReference type="GO" id="GO:1903425">
    <property type="term" value="F:fluoride transmembrane transporter activity"/>
    <property type="evidence" value="ECO:0000318"/>
    <property type="project" value="GO_Central"/>
</dbReference>
<dbReference type="GO" id="GO:0046872">
    <property type="term" value="F:metal ion binding"/>
    <property type="evidence" value="ECO:0007669"/>
    <property type="project" value="UniProtKB-KW"/>
</dbReference>
<dbReference type="GO" id="GO:0140114">
    <property type="term" value="P:cellular detoxification of fluoride"/>
    <property type="evidence" value="ECO:0007669"/>
    <property type="project" value="UniProtKB-UniRule"/>
</dbReference>
<dbReference type="GO" id="GO:1903424">
    <property type="term" value="P:fluoride transmembrane transport"/>
    <property type="evidence" value="ECO:0000318"/>
    <property type="project" value="GO_Central"/>
</dbReference>
<dbReference type="HAMAP" id="MF_00454">
    <property type="entry name" value="FluC"/>
    <property type="match status" value="1"/>
</dbReference>
<dbReference type="InterPro" id="IPR003691">
    <property type="entry name" value="FluC"/>
</dbReference>
<dbReference type="NCBIfam" id="TIGR00494">
    <property type="entry name" value="crcB"/>
    <property type="match status" value="1"/>
</dbReference>
<dbReference type="PANTHER" id="PTHR28259">
    <property type="entry name" value="FLUORIDE EXPORT PROTEIN 1-RELATED"/>
    <property type="match status" value="1"/>
</dbReference>
<dbReference type="PANTHER" id="PTHR28259:SF18">
    <property type="entry name" value="FLUORIDE-SPECIFIC ION CHANNEL FLUC"/>
    <property type="match status" value="1"/>
</dbReference>
<dbReference type="Pfam" id="PF02537">
    <property type="entry name" value="CRCB"/>
    <property type="match status" value="1"/>
</dbReference>
<gene>
    <name evidence="1" type="primary">fluC3</name>
    <name evidence="1" type="synonym">crcB3</name>
    <name type="ordered locus">YPO2677</name>
    <name type="ordered locus">y1249</name>
    <name type="ordered locus">YP_2478</name>
</gene>
<proteinExistence type="inferred from homology"/>
<reference key="1">
    <citation type="journal article" date="2001" name="Nature">
        <title>Genome sequence of Yersinia pestis, the causative agent of plague.</title>
        <authorList>
            <person name="Parkhill J."/>
            <person name="Wren B.W."/>
            <person name="Thomson N.R."/>
            <person name="Titball R.W."/>
            <person name="Holden M.T.G."/>
            <person name="Prentice M.B."/>
            <person name="Sebaihia M."/>
            <person name="James K.D."/>
            <person name="Churcher C.M."/>
            <person name="Mungall K.L."/>
            <person name="Baker S."/>
            <person name="Basham D."/>
            <person name="Bentley S.D."/>
            <person name="Brooks K."/>
            <person name="Cerdeno-Tarraga A.-M."/>
            <person name="Chillingworth T."/>
            <person name="Cronin A."/>
            <person name="Davies R.M."/>
            <person name="Davis P."/>
            <person name="Dougan G."/>
            <person name="Feltwell T."/>
            <person name="Hamlin N."/>
            <person name="Holroyd S."/>
            <person name="Jagels K."/>
            <person name="Karlyshev A.V."/>
            <person name="Leather S."/>
            <person name="Moule S."/>
            <person name="Oyston P.C.F."/>
            <person name="Quail M.A."/>
            <person name="Rutherford K.M."/>
            <person name="Simmonds M."/>
            <person name="Skelton J."/>
            <person name="Stevens K."/>
            <person name="Whitehead S."/>
            <person name="Barrell B.G."/>
        </authorList>
    </citation>
    <scope>NUCLEOTIDE SEQUENCE [LARGE SCALE GENOMIC DNA]</scope>
    <source>
        <strain>CO-92 / Biovar Orientalis</strain>
    </source>
</reference>
<reference key="2">
    <citation type="journal article" date="2002" name="J. Bacteriol.">
        <title>Genome sequence of Yersinia pestis KIM.</title>
        <authorList>
            <person name="Deng W."/>
            <person name="Burland V."/>
            <person name="Plunkett G. III"/>
            <person name="Boutin A."/>
            <person name="Mayhew G.F."/>
            <person name="Liss P."/>
            <person name="Perna N.T."/>
            <person name="Rose D.J."/>
            <person name="Mau B."/>
            <person name="Zhou S."/>
            <person name="Schwartz D.C."/>
            <person name="Fetherston J.D."/>
            <person name="Lindler L.E."/>
            <person name="Brubaker R.R."/>
            <person name="Plano G.V."/>
            <person name="Straley S.C."/>
            <person name="McDonough K.A."/>
            <person name="Nilles M.L."/>
            <person name="Matson J.S."/>
            <person name="Blattner F.R."/>
            <person name="Perry R.D."/>
        </authorList>
    </citation>
    <scope>NUCLEOTIDE SEQUENCE [LARGE SCALE GENOMIC DNA]</scope>
    <source>
        <strain>KIM10+ / Biovar Mediaevalis</strain>
    </source>
</reference>
<reference key="3">
    <citation type="journal article" date="2004" name="DNA Res.">
        <title>Complete genome sequence of Yersinia pestis strain 91001, an isolate avirulent to humans.</title>
        <authorList>
            <person name="Song Y."/>
            <person name="Tong Z."/>
            <person name="Wang J."/>
            <person name="Wang L."/>
            <person name="Guo Z."/>
            <person name="Han Y."/>
            <person name="Zhang J."/>
            <person name="Pei D."/>
            <person name="Zhou D."/>
            <person name="Qin H."/>
            <person name="Pang X."/>
            <person name="Han Y."/>
            <person name="Zhai J."/>
            <person name="Li M."/>
            <person name="Cui B."/>
            <person name="Qi Z."/>
            <person name="Jin L."/>
            <person name="Dai R."/>
            <person name="Chen F."/>
            <person name="Li S."/>
            <person name="Ye C."/>
            <person name="Du Z."/>
            <person name="Lin W."/>
            <person name="Wang J."/>
            <person name="Yu J."/>
            <person name="Yang H."/>
            <person name="Wang J."/>
            <person name="Huang P."/>
            <person name="Yang R."/>
        </authorList>
    </citation>
    <scope>NUCLEOTIDE SEQUENCE [LARGE SCALE GENOMIC DNA]</scope>
    <source>
        <strain>91001 / Biovar Mediaevalis</strain>
    </source>
</reference>
<organism>
    <name type="scientific">Yersinia pestis</name>
    <dbReference type="NCBI Taxonomy" id="632"/>
    <lineage>
        <taxon>Bacteria</taxon>
        <taxon>Pseudomonadati</taxon>
        <taxon>Pseudomonadota</taxon>
        <taxon>Gammaproteobacteria</taxon>
        <taxon>Enterobacterales</taxon>
        <taxon>Yersiniaceae</taxon>
        <taxon>Yersinia</taxon>
    </lineage>
</organism>
<name>FLUC3_YERPE</name>
<feature type="chain" id="PRO_0000110217" description="Fluoride-specific ion channel FluC 3">
    <location>
        <begin position="1"/>
        <end position="126"/>
    </location>
</feature>
<feature type="transmembrane region" description="Helical" evidence="1">
    <location>
        <begin position="7"/>
        <end position="27"/>
    </location>
</feature>
<feature type="transmembrane region" description="Helical" evidence="1">
    <location>
        <begin position="37"/>
        <end position="57"/>
    </location>
</feature>
<feature type="transmembrane region" description="Helical" evidence="1">
    <location>
        <begin position="68"/>
        <end position="87"/>
    </location>
</feature>
<feature type="transmembrane region" description="Helical" evidence="1">
    <location>
        <begin position="101"/>
        <end position="121"/>
    </location>
</feature>
<feature type="binding site" evidence="1">
    <location>
        <position position="79"/>
    </location>
    <ligand>
        <name>Na(+)</name>
        <dbReference type="ChEBI" id="CHEBI:29101"/>
        <note>structural</note>
    </ligand>
</feature>
<feature type="binding site" evidence="1">
    <location>
        <position position="82"/>
    </location>
    <ligand>
        <name>Na(+)</name>
        <dbReference type="ChEBI" id="CHEBI:29101"/>
        <note>structural</note>
    </ligand>
</feature>
<comment type="function">
    <text evidence="1">Fluoride-specific ion channel. Important for reducing fluoride concentration in the cell, thus reducing its toxicity.</text>
</comment>
<comment type="catalytic activity">
    <reaction evidence="1">
        <text>fluoride(in) = fluoride(out)</text>
        <dbReference type="Rhea" id="RHEA:76159"/>
        <dbReference type="ChEBI" id="CHEBI:17051"/>
    </reaction>
    <physiologicalReaction direction="left-to-right" evidence="1">
        <dbReference type="Rhea" id="RHEA:76160"/>
    </physiologicalReaction>
</comment>
<comment type="activity regulation">
    <text evidence="1">Na(+) is not transported, but it plays an essential structural role and its presence is essential for fluoride channel function.</text>
</comment>
<comment type="subcellular location">
    <subcellularLocation>
        <location evidence="1">Cell inner membrane</location>
        <topology evidence="1">Multi-pass membrane protein</topology>
    </subcellularLocation>
</comment>
<comment type="similarity">
    <text evidence="1">Belongs to the fluoride channel Fluc/FEX (TC 1.A.43) family.</text>
</comment>
<sequence>MTAIDVMWVGLGGGIGSLLRWWIGLSIGKVYKGNFPLGTFLINISGAFVIGYLSILFSVDWRDRYGDLMNTAVLTGILGGYTTFSSMQLDAAKLATARGRAIAAGYLIISVLVGLAAAAFGAWLAY</sequence>
<keyword id="KW-0997">Cell inner membrane</keyword>
<keyword id="KW-1003">Cell membrane</keyword>
<keyword id="KW-0407">Ion channel</keyword>
<keyword id="KW-0406">Ion transport</keyword>
<keyword id="KW-0472">Membrane</keyword>
<keyword id="KW-0479">Metal-binding</keyword>
<keyword id="KW-1185">Reference proteome</keyword>
<keyword id="KW-0915">Sodium</keyword>
<keyword id="KW-0812">Transmembrane</keyword>
<keyword id="KW-1133">Transmembrane helix</keyword>
<keyword id="KW-0813">Transport</keyword>
<evidence type="ECO:0000255" key="1">
    <source>
        <dbReference type="HAMAP-Rule" id="MF_00454"/>
    </source>
</evidence>
<accession>Q8ZDB1</accession>
<accession>Q0WDL3</accession>